<name>TM115_YEAST</name>
<accession>Q12239</accession>
<accession>D6W1W0</accession>
<keyword id="KW-0325">Glycoprotein</keyword>
<keyword id="KW-0333">Golgi apparatus</keyword>
<keyword id="KW-0472">Membrane</keyword>
<keyword id="KW-1185">Reference proteome</keyword>
<keyword id="KW-0812">Transmembrane</keyword>
<keyword id="KW-1133">Transmembrane helix</keyword>
<gene>
    <name type="ordered locus">YOL107W</name>
</gene>
<sequence length="342" mass="39742">MQYSSRFLELNIPDSFLNINKIPDATKFITVTYICLTATLFCIRRSLYNKLVLEDPNLDYNLITSPLLQMVPSQIWRYPTSLVLSNFIDTKAWKVVVNLLNLIIGGSFIERNWNSSKEMFKFIIVLGSLTNVLIIMLTLLVSFFSNKVRLDIPLDGNYTILIGFPIIYRQLLPETTIIHLKTPQFLAKNFRFKLLPIFVMFTMTVTQIIWFHHFAQLFSIWVTFFASWSYLRFFQKLAPLNCPSLPTTNSQGGQEILVGDASDTFQLIYFFPDLIKPILRPIFNFIYNVVVVKFKVIKPFHDIDIDIGNTIAESRGAKKIMTVEERRRQLALQVLEERMVNP</sequence>
<dbReference type="EMBL" id="Z48149">
    <property type="protein sequence ID" value="CAA88154.1"/>
    <property type="molecule type" value="Genomic_DNA"/>
</dbReference>
<dbReference type="EMBL" id="Z74849">
    <property type="protein sequence ID" value="CAA99126.1"/>
    <property type="molecule type" value="Genomic_DNA"/>
</dbReference>
<dbReference type="EMBL" id="BK006948">
    <property type="protein sequence ID" value="DAA10676.1"/>
    <property type="molecule type" value="Genomic_DNA"/>
</dbReference>
<dbReference type="PIR" id="S51891">
    <property type="entry name" value="S51891"/>
</dbReference>
<dbReference type="RefSeq" id="NP_014534.1">
    <property type="nucleotide sequence ID" value="NM_001183361.1"/>
</dbReference>
<dbReference type="BioGRID" id="34294">
    <property type="interactions" value="37"/>
</dbReference>
<dbReference type="DIP" id="DIP-4218N"/>
<dbReference type="FunCoup" id="Q12239">
    <property type="interactions" value="705"/>
</dbReference>
<dbReference type="IntAct" id="Q12239">
    <property type="interactions" value="2"/>
</dbReference>
<dbReference type="MINT" id="Q12239"/>
<dbReference type="GlyGen" id="Q12239">
    <property type="glycosylation" value="1 site"/>
</dbReference>
<dbReference type="PaxDb" id="4932-YOL107W"/>
<dbReference type="PeptideAtlas" id="Q12239"/>
<dbReference type="EnsemblFungi" id="YOL107W_mRNA">
    <property type="protein sequence ID" value="YOL107W"/>
    <property type="gene ID" value="YOL107W"/>
</dbReference>
<dbReference type="GeneID" id="854043"/>
<dbReference type="KEGG" id="sce:YOL107W"/>
<dbReference type="AGR" id="SGD:S000005467"/>
<dbReference type="SGD" id="S000005467">
    <property type="gene designation" value="YOL107W"/>
</dbReference>
<dbReference type="VEuPathDB" id="FungiDB:YOL107W"/>
<dbReference type="eggNOG" id="KOG2890">
    <property type="taxonomic scope" value="Eukaryota"/>
</dbReference>
<dbReference type="GeneTree" id="ENSGT00390000002470"/>
<dbReference type="HOGENOM" id="CLU_043563_1_0_1"/>
<dbReference type="InParanoid" id="Q12239"/>
<dbReference type="OMA" id="EIHFWEV"/>
<dbReference type="OrthoDB" id="73612at2759"/>
<dbReference type="BioCyc" id="YEAST:G3O-33504-MONOMER"/>
<dbReference type="BioGRID-ORCS" id="854043">
    <property type="hits" value="0 hits in 10 CRISPR screens"/>
</dbReference>
<dbReference type="PRO" id="PR:Q12239"/>
<dbReference type="Proteomes" id="UP000002311">
    <property type="component" value="Chromosome XV"/>
</dbReference>
<dbReference type="RNAct" id="Q12239">
    <property type="molecule type" value="protein"/>
</dbReference>
<dbReference type="GO" id="GO:0030137">
    <property type="term" value="C:COPI-coated vesicle"/>
    <property type="evidence" value="ECO:0007005"/>
    <property type="project" value="SGD"/>
</dbReference>
<dbReference type="GO" id="GO:0005794">
    <property type="term" value="C:Golgi apparatus"/>
    <property type="evidence" value="ECO:0007005"/>
    <property type="project" value="SGD"/>
</dbReference>
<dbReference type="GO" id="GO:0000139">
    <property type="term" value="C:Golgi membrane"/>
    <property type="evidence" value="ECO:0007669"/>
    <property type="project" value="UniProtKB-SubCell"/>
</dbReference>
<dbReference type="GO" id="GO:0006890">
    <property type="term" value="P:retrograde vesicle-mediated transport, Golgi to endoplasmic reticulum"/>
    <property type="evidence" value="ECO:0000318"/>
    <property type="project" value="GO_Central"/>
</dbReference>
<dbReference type="InterPro" id="IPR013861">
    <property type="entry name" value="TMEM115/Pdh1/Rbl19"/>
</dbReference>
<dbReference type="PANTHER" id="PTHR13377">
    <property type="entry name" value="PLACENTAL PROTEIN 6"/>
    <property type="match status" value="1"/>
</dbReference>
<dbReference type="PANTHER" id="PTHR13377:SF3">
    <property type="entry name" value="TRANSMEMBRANE PROTEIN 115"/>
    <property type="match status" value="1"/>
</dbReference>
<dbReference type="Pfam" id="PF08551">
    <property type="entry name" value="DUF1751"/>
    <property type="match status" value="1"/>
</dbReference>
<dbReference type="SMART" id="SM01160">
    <property type="entry name" value="DUF1751"/>
    <property type="match status" value="1"/>
</dbReference>
<organism>
    <name type="scientific">Saccharomyces cerevisiae (strain ATCC 204508 / S288c)</name>
    <name type="common">Baker's yeast</name>
    <dbReference type="NCBI Taxonomy" id="559292"/>
    <lineage>
        <taxon>Eukaryota</taxon>
        <taxon>Fungi</taxon>
        <taxon>Dikarya</taxon>
        <taxon>Ascomycota</taxon>
        <taxon>Saccharomycotina</taxon>
        <taxon>Saccharomycetes</taxon>
        <taxon>Saccharomycetales</taxon>
        <taxon>Saccharomycetaceae</taxon>
        <taxon>Saccharomyces</taxon>
    </lineage>
</organism>
<protein>
    <recommendedName>
        <fullName evidence="5">Transmembrane protein 115 homolog</fullName>
    </recommendedName>
</protein>
<evidence type="ECO:0000250" key="1">
    <source>
        <dbReference type="UniProtKB" id="Q12893"/>
    </source>
</evidence>
<evidence type="ECO:0000255" key="2"/>
<evidence type="ECO:0000269" key="3">
    <source>
    </source>
</evidence>
<evidence type="ECO:0000269" key="4">
    <source>
    </source>
</evidence>
<evidence type="ECO:0000305" key="5"/>
<comment type="function">
    <text evidence="1">May play a role in retrograde transport of proteins from the Golgi to the endoplasmic reticulum.</text>
</comment>
<comment type="subunit">
    <text evidence="1">Homooligomer.</text>
</comment>
<comment type="subcellular location">
    <subcellularLocation>
        <location evidence="3">Golgi apparatus membrane</location>
        <topology evidence="3">Multi-pass membrane protein</topology>
    </subcellularLocation>
</comment>
<comment type="miscellaneous">
    <text evidence="4">Present with 1630 molecules/cell in log phase SD medium.</text>
</comment>
<comment type="similarity">
    <text evidence="5">Belongs to the TMEM115 family.</text>
</comment>
<proteinExistence type="evidence at protein level"/>
<feature type="chain" id="PRO_0000235931" description="Transmembrane protein 115 homolog">
    <location>
        <begin position="1"/>
        <end position="342"/>
    </location>
</feature>
<feature type="topological domain" description="Cytoplasmic" evidence="5">
    <location>
        <begin position="1"/>
        <end position="21"/>
    </location>
</feature>
<feature type="transmembrane region" description="Helical; Name=1" evidence="2">
    <location>
        <begin position="22"/>
        <end position="42"/>
    </location>
</feature>
<feature type="topological domain" description="Lumenal" evidence="5">
    <location>
        <begin position="43"/>
        <end position="121"/>
    </location>
</feature>
<feature type="transmembrane region" description="Helical; Name=2" evidence="2">
    <location>
        <begin position="122"/>
        <end position="142"/>
    </location>
</feature>
<feature type="topological domain" description="Cytoplasmic" evidence="5">
    <location>
        <begin position="143"/>
        <end position="159"/>
    </location>
</feature>
<feature type="transmembrane region" description="Helical; Name=3" evidence="2">
    <location>
        <begin position="160"/>
        <end position="180"/>
    </location>
</feature>
<feature type="topological domain" description="Lumenal" evidence="5">
    <location>
        <begin position="181"/>
        <end position="207"/>
    </location>
</feature>
<feature type="transmembrane region" description="Helical; Name=4" evidence="2">
    <location>
        <begin position="208"/>
        <end position="228"/>
    </location>
</feature>
<feature type="topological domain" description="Cytoplasmic" evidence="5">
    <location>
        <begin position="229"/>
        <end position="342"/>
    </location>
</feature>
<feature type="glycosylation site" description="N-linked (GlcNAc...) asparagine" evidence="2">
    <location>
        <position position="114"/>
    </location>
</feature>
<reference key="1">
    <citation type="journal article" date="1995" name="Yeast">
        <title>Sequence analysis of a 44 kb DNA fragment of yeast chromosome XV including the Ty1-H3 retrotransposon, the suf1(+) frameshift suppressor gene for tRNA-Gly, the yeast transfer RNA-Thr-1a and a delta element.</title>
        <authorList>
            <person name="Vandenbol M."/>
            <person name="Durand P."/>
            <person name="Portetelle D."/>
            <person name="Hilger F."/>
        </authorList>
    </citation>
    <scope>NUCLEOTIDE SEQUENCE [GENOMIC DNA]</scope>
    <source>
        <strain>ATCC 96604 / S288c / FY1679</strain>
    </source>
</reference>
<reference key="2">
    <citation type="journal article" date="1997" name="Nature">
        <title>The nucleotide sequence of Saccharomyces cerevisiae chromosome XV.</title>
        <authorList>
            <person name="Dujon B."/>
            <person name="Albermann K."/>
            <person name="Aldea M."/>
            <person name="Alexandraki D."/>
            <person name="Ansorge W."/>
            <person name="Arino J."/>
            <person name="Benes V."/>
            <person name="Bohn C."/>
            <person name="Bolotin-Fukuhara M."/>
            <person name="Bordonne R."/>
            <person name="Boyer J."/>
            <person name="Camasses A."/>
            <person name="Casamayor A."/>
            <person name="Casas C."/>
            <person name="Cheret G."/>
            <person name="Cziepluch C."/>
            <person name="Daignan-Fornier B."/>
            <person name="Dang V.-D."/>
            <person name="de Haan M."/>
            <person name="Delius H."/>
            <person name="Durand P."/>
            <person name="Fairhead C."/>
            <person name="Feldmann H."/>
            <person name="Gaillon L."/>
            <person name="Galisson F."/>
            <person name="Gamo F.-J."/>
            <person name="Gancedo C."/>
            <person name="Goffeau A."/>
            <person name="Goulding S.E."/>
            <person name="Grivell L.A."/>
            <person name="Habbig B."/>
            <person name="Hand N.J."/>
            <person name="Hani J."/>
            <person name="Hattenhorst U."/>
            <person name="Hebling U."/>
            <person name="Hernando Y."/>
            <person name="Herrero E."/>
            <person name="Heumann K."/>
            <person name="Hiesel R."/>
            <person name="Hilger F."/>
            <person name="Hofmann B."/>
            <person name="Hollenberg C.P."/>
            <person name="Hughes B."/>
            <person name="Jauniaux J.-C."/>
            <person name="Kalogeropoulos A."/>
            <person name="Katsoulou C."/>
            <person name="Kordes E."/>
            <person name="Lafuente M.J."/>
            <person name="Landt O."/>
            <person name="Louis E.J."/>
            <person name="Maarse A.C."/>
            <person name="Madania A."/>
            <person name="Mannhaupt G."/>
            <person name="Marck C."/>
            <person name="Martin R.P."/>
            <person name="Mewes H.-W."/>
            <person name="Michaux G."/>
            <person name="Paces V."/>
            <person name="Parle-McDermott A.G."/>
            <person name="Pearson B.M."/>
            <person name="Perrin A."/>
            <person name="Pettersson B."/>
            <person name="Poch O."/>
            <person name="Pohl T.M."/>
            <person name="Poirey R."/>
            <person name="Portetelle D."/>
            <person name="Pujol A."/>
            <person name="Purnelle B."/>
            <person name="Ramezani Rad M."/>
            <person name="Rechmann S."/>
            <person name="Schwager C."/>
            <person name="Schweizer M."/>
            <person name="Sor F."/>
            <person name="Sterky F."/>
            <person name="Tarassov I.A."/>
            <person name="Teodoru C."/>
            <person name="Tettelin H."/>
            <person name="Thierry A."/>
            <person name="Tobiasch E."/>
            <person name="Tzermia M."/>
            <person name="Uhlen M."/>
            <person name="Unseld M."/>
            <person name="Valens M."/>
            <person name="Vandenbol M."/>
            <person name="Vetter I."/>
            <person name="Vlcek C."/>
            <person name="Voet M."/>
            <person name="Volckaert G."/>
            <person name="Voss H."/>
            <person name="Wambutt R."/>
            <person name="Wedler H."/>
            <person name="Wiemann S."/>
            <person name="Winsor B."/>
            <person name="Wolfe K.H."/>
            <person name="Zollner A."/>
            <person name="Zumstein E."/>
            <person name="Kleine K."/>
        </authorList>
    </citation>
    <scope>NUCLEOTIDE SEQUENCE [LARGE SCALE GENOMIC DNA]</scope>
    <source>
        <strain>ATCC 204508 / S288c</strain>
    </source>
</reference>
<reference key="3">
    <citation type="journal article" date="2014" name="G3 (Bethesda)">
        <title>The reference genome sequence of Saccharomyces cerevisiae: Then and now.</title>
        <authorList>
            <person name="Engel S.R."/>
            <person name="Dietrich F.S."/>
            <person name="Fisk D.G."/>
            <person name="Binkley G."/>
            <person name="Balakrishnan R."/>
            <person name="Costanzo M.C."/>
            <person name="Dwight S.S."/>
            <person name="Hitz B.C."/>
            <person name="Karra K."/>
            <person name="Nash R.S."/>
            <person name="Weng S."/>
            <person name="Wong E.D."/>
            <person name="Lloyd P."/>
            <person name="Skrzypek M.S."/>
            <person name="Miyasato S.R."/>
            <person name="Simison M."/>
            <person name="Cherry J.M."/>
        </authorList>
    </citation>
    <scope>GENOME REANNOTATION</scope>
    <source>
        <strain>ATCC 204508 / S288c</strain>
    </source>
</reference>
<reference key="4">
    <citation type="journal article" date="2003" name="Nature">
        <title>Global analysis of protein localization in budding yeast.</title>
        <authorList>
            <person name="Huh W.-K."/>
            <person name="Falvo J.V."/>
            <person name="Gerke L.C."/>
            <person name="Carroll A.S."/>
            <person name="Howson R.W."/>
            <person name="Weissman J.S."/>
            <person name="O'Shea E.K."/>
        </authorList>
    </citation>
    <scope>SUBCELLULAR LOCATION [LARGE SCALE ANALYSIS]</scope>
</reference>
<reference key="5">
    <citation type="journal article" date="2003" name="Nature">
        <title>Global analysis of protein expression in yeast.</title>
        <authorList>
            <person name="Ghaemmaghami S."/>
            <person name="Huh W.-K."/>
            <person name="Bower K."/>
            <person name="Howson R.W."/>
            <person name="Belle A."/>
            <person name="Dephoure N."/>
            <person name="O'Shea E.K."/>
            <person name="Weissman J.S."/>
        </authorList>
    </citation>
    <scope>LEVEL OF PROTEIN EXPRESSION [LARGE SCALE ANALYSIS]</scope>
</reference>
<reference key="6">
    <citation type="journal article" date="2006" name="Proc. Natl. Acad. Sci. U.S.A.">
        <title>A global topology map of the Saccharomyces cerevisiae membrane proteome.</title>
        <authorList>
            <person name="Kim H."/>
            <person name="Melen K."/>
            <person name="Oesterberg M."/>
            <person name="von Heijne G."/>
        </authorList>
    </citation>
    <scope>TOPOLOGY [LARGE SCALE ANALYSIS]</scope>
    <source>
        <strain>ATCC 208353 / W303-1A</strain>
    </source>
</reference>